<comment type="function">
    <text evidence="1">Cell wall formation. Adds enolpyruvyl to UDP-N-acetylglucosamine.</text>
</comment>
<comment type="catalytic activity">
    <reaction evidence="1">
        <text>phosphoenolpyruvate + UDP-N-acetyl-alpha-D-glucosamine = UDP-N-acetyl-3-O-(1-carboxyvinyl)-alpha-D-glucosamine + phosphate</text>
        <dbReference type="Rhea" id="RHEA:18681"/>
        <dbReference type="ChEBI" id="CHEBI:43474"/>
        <dbReference type="ChEBI" id="CHEBI:57705"/>
        <dbReference type="ChEBI" id="CHEBI:58702"/>
        <dbReference type="ChEBI" id="CHEBI:68483"/>
        <dbReference type="EC" id="2.5.1.7"/>
    </reaction>
</comment>
<comment type="pathway">
    <text evidence="1">Cell wall biogenesis; peptidoglycan biosynthesis.</text>
</comment>
<comment type="subcellular location">
    <subcellularLocation>
        <location evidence="1">Cytoplasm</location>
    </subcellularLocation>
</comment>
<comment type="similarity">
    <text evidence="1">Belongs to the EPSP synthase family. MurA subfamily.</text>
</comment>
<dbReference type="EC" id="2.5.1.7" evidence="1"/>
<dbReference type="EMBL" id="CP000251">
    <property type="protein sequence ID" value="ABC80140.1"/>
    <property type="molecule type" value="Genomic_DNA"/>
</dbReference>
<dbReference type="RefSeq" id="WP_011419423.1">
    <property type="nucleotide sequence ID" value="NC_007760.1"/>
</dbReference>
<dbReference type="SMR" id="Q2IMV5"/>
<dbReference type="STRING" id="290397.Adeh_0364"/>
<dbReference type="KEGG" id="ade:Adeh_0364"/>
<dbReference type="eggNOG" id="COG0766">
    <property type="taxonomic scope" value="Bacteria"/>
</dbReference>
<dbReference type="HOGENOM" id="CLU_027387_0_0_7"/>
<dbReference type="OrthoDB" id="9803760at2"/>
<dbReference type="UniPathway" id="UPA00219"/>
<dbReference type="Proteomes" id="UP000001935">
    <property type="component" value="Chromosome"/>
</dbReference>
<dbReference type="GO" id="GO:0005737">
    <property type="term" value="C:cytoplasm"/>
    <property type="evidence" value="ECO:0007669"/>
    <property type="project" value="UniProtKB-SubCell"/>
</dbReference>
<dbReference type="GO" id="GO:0008760">
    <property type="term" value="F:UDP-N-acetylglucosamine 1-carboxyvinyltransferase activity"/>
    <property type="evidence" value="ECO:0007669"/>
    <property type="project" value="UniProtKB-UniRule"/>
</dbReference>
<dbReference type="GO" id="GO:0051301">
    <property type="term" value="P:cell division"/>
    <property type="evidence" value="ECO:0007669"/>
    <property type="project" value="UniProtKB-KW"/>
</dbReference>
<dbReference type="GO" id="GO:0071555">
    <property type="term" value="P:cell wall organization"/>
    <property type="evidence" value="ECO:0007669"/>
    <property type="project" value="UniProtKB-KW"/>
</dbReference>
<dbReference type="GO" id="GO:0009252">
    <property type="term" value="P:peptidoglycan biosynthetic process"/>
    <property type="evidence" value="ECO:0007669"/>
    <property type="project" value="UniProtKB-UniRule"/>
</dbReference>
<dbReference type="GO" id="GO:0008360">
    <property type="term" value="P:regulation of cell shape"/>
    <property type="evidence" value="ECO:0007669"/>
    <property type="project" value="UniProtKB-KW"/>
</dbReference>
<dbReference type="GO" id="GO:0019277">
    <property type="term" value="P:UDP-N-acetylgalactosamine biosynthetic process"/>
    <property type="evidence" value="ECO:0007669"/>
    <property type="project" value="InterPro"/>
</dbReference>
<dbReference type="CDD" id="cd01555">
    <property type="entry name" value="UdpNAET"/>
    <property type="match status" value="1"/>
</dbReference>
<dbReference type="FunFam" id="3.65.10.10:FF:000001">
    <property type="entry name" value="UDP-N-acetylglucosamine 1-carboxyvinyltransferase"/>
    <property type="match status" value="1"/>
</dbReference>
<dbReference type="Gene3D" id="3.65.10.10">
    <property type="entry name" value="Enolpyruvate transferase domain"/>
    <property type="match status" value="2"/>
</dbReference>
<dbReference type="HAMAP" id="MF_00111">
    <property type="entry name" value="MurA"/>
    <property type="match status" value="1"/>
</dbReference>
<dbReference type="InterPro" id="IPR001986">
    <property type="entry name" value="Enolpyruvate_Tfrase_dom"/>
</dbReference>
<dbReference type="InterPro" id="IPR036968">
    <property type="entry name" value="Enolpyruvate_Tfrase_sf"/>
</dbReference>
<dbReference type="InterPro" id="IPR050068">
    <property type="entry name" value="MurA_subfamily"/>
</dbReference>
<dbReference type="InterPro" id="IPR013792">
    <property type="entry name" value="RNA3'P_cycl/enolpyr_Trfase_a/b"/>
</dbReference>
<dbReference type="InterPro" id="IPR005750">
    <property type="entry name" value="UDP_GlcNAc_COvinyl_MurA"/>
</dbReference>
<dbReference type="NCBIfam" id="TIGR01072">
    <property type="entry name" value="murA"/>
    <property type="match status" value="1"/>
</dbReference>
<dbReference type="NCBIfam" id="NF006873">
    <property type="entry name" value="PRK09369.1"/>
    <property type="match status" value="1"/>
</dbReference>
<dbReference type="PANTHER" id="PTHR43783">
    <property type="entry name" value="UDP-N-ACETYLGLUCOSAMINE 1-CARBOXYVINYLTRANSFERASE"/>
    <property type="match status" value="1"/>
</dbReference>
<dbReference type="PANTHER" id="PTHR43783:SF1">
    <property type="entry name" value="UDP-N-ACETYLGLUCOSAMINE 1-CARBOXYVINYLTRANSFERASE"/>
    <property type="match status" value="1"/>
</dbReference>
<dbReference type="Pfam" id="PF00275">
    <property type="entry name" value="EPSP_synthase"/>
    <property type="match status" value="1"/>
</dbReference>
<dbReference type="SUPFAM" id="SSF55205">
    <property type="entry name" value="EPT/RTPC-like"/>
    <property type="match status" value="1"/>
</dbReference>
<proteinExistence type="inferred from homology"/>
<accession>Q2IMV5</accession>
<name>MURA_ANADE</name>
<keyword id="KW-0131">Cell cycle</keyword>
<keyword id="KW-0132">Cell division</keyword>
<keyword id="KW-0133">Cell shape</keyword>
<keyword id="KW-0961">Cell wall biogenesis/degradation</keyword>
<keyword id="KW-0963">Cytoplasm</keyword>
<keyword id="KW-0573">Peptidoglycan synthesis</keyword>
<keyword id="KW-0670">Pyruvate</keyword>
<keyword id="KW-1185">Reference proteome</keyword>
<keyword id="KW-0808">Transferase</keyword>
<gene>
    <name evidence="1" type="primary">murA</name>
    <name type="ordered locus">Adeh_0364</name>
</gene>
<reference key="1">
    <citation type="submission" date="2006-01" db="EMBL/GenBank/DDBJ databases">
        <title>Complete sequence of Anaeromyxobacter dehalogenans 2CP-C.</title>
        <authorList>
            <person name="Copeland A."/>
            <person name="Lucas S."/>
            <person name="Lapidus A."/>
            <person name="Barry K."/>
            <person name="Detter J.C."/>
            <person name="Glavina T."/>
            <person name="Hammon N."/>
            <person name="Israni S."/>
            <person name="Pitluck S."/>
            <person name="Brettin T."/>
            <person name="Bruce D."/>
            <person name="Han C."/>
            <person name="Tapia R."/>
            <person name="Gilna P."/>
            <person name="Kiss H."/>
            <person name="Schmutz J."/>
            <person name="Larimer F."/>
            <person name="Land M."/>
            <person name="Kyrpides N."/>
            <person name="Anderson I."/>
            <person name="Sanford R.A."/>
            <person name="Ritalahti K.M."/>
            <person name="Thomas H.S."/>
            <person name="Kirby J.R."/>
            <person name="Zhulin I.B."/>
            <person name="Loeffler F.E."/>
            <person name="Richardson P."/>
        </authorList>
    </citation>
    <scope>NUCLEOTIDE SEQUENCE [LARGE SCALE GENOMIC DNA]</scope>
    <source>
        <strain>2CP-C</strain>
    </source>
</reference>
<protein>
    <recommendedName>
        <fullName evidence="1">UDP-N-acetylglucosamine 1-carboxyvinyltransferase</fullName>
        <ecNumber evidence="1">2.5.1.7</ecNumber>
    </recommendedName>
    <alternativeName>
        <fullName evidence="1">Enoylpyruvate transferase</fullName>
    </alternativeName>
    <alternativeName>
        <fullName evidence="1">UDP-N-acetylglucosamine enolpyruvyl transferase</fullName>
        <shortName evidence="1">EPT</shortName>
    </alternativeName>
</protein>
<sequence>MDKIVIEGGVPLRGSVDVSGAKNAALPVIAAALLAEGEHEVRNVPDLADVRTLGKLLGHMGCEVVRGEGDRRTVRLRVPAAVTPEAPYELVKTMRASVLVLGPLLARLGRARVSLPGGCAIGARPIDQHLKALTALGAEIRLEHGYVNASVPGGRLRGTVFTFDAQTVTGTENVMMAAALAEGETVLRNCAREPEVKDLGDALVAMGALVEGAGTDEIWIEGVPSLRPLSHAVIPDRIEAGTFLVAGALPGNDVTVRGCVAAHQEALVEKLRAVGAEVTKVEGGLRVIGDGRPRPVDVRTAPHPGFPTDMQAQLMVLLCLADGTSRITETVFENRFMHVQELIRLGAHVEVDGRVAMVKGVPELSGAPVMASDLRASAALVLAGLAATGTTEVLRVYHLDRGYERIEEKLAPLGARIRRVRG</sequence>
<evidence type="ECO:0000255" key="1">
    <source>
        <dbReference type="HAMAP-Rule" id="MF_00111"/>
    </source>
</evidence>
<organism>
    <name type="scientific">Anaeromyxobacter dehalogenans (strain 2CP-C)</name>
    <dbReference type="NCBI Taxonomy" id="290397"/>
    <lineage>
        <taxon>Bacteria</taxon>
        <taxon>Pseudomonadati</taxon>
        <taxon>Myxococcota</taxon>
        <taxon>Myxococcia</taxon>
        <taxon>Myxococcales</taxon>
        <taxon>Cystobacterineae</taxon>
        <taxon>Anaeromyxobacteraceae</taxon>
        <taxon>Anaeromyxobacter</taxon>
    </lineage>
</organism>
<feature type="chain" id="PRO_1000023018" description="UDP-N-acetylglucosamine 1-carboxyvinyltransferase">
    <location>
        <begin position="1"/>
        <end position="422"/>
    </location>
</feature>
<feature type="active site" description="Proton donor" evidence="1">
    <location>
        <position position="119"/>
    </location>
</feature>
<feature type="binding site" evidence="1">
    <location>
        <begin position="22"/>
        <end position="23"/>
    </location>
    <ligand>
        <name>phosphoenolpyruvate</name>
        <dbReference type="ChEBI" id="CHEBI:58702"/>
    </ligand>
</feature>
<feature type="binding site" evidence="1">
    <location>
        <position position="95"/>
    </location>
    <ligand>
        <name>UDP-N-acetyl-alpha-D-glucosamine</name>
        <dbReference type="ChEBI" id="CHEBI:57705"/>
    </ligand>
</feature>
<feature type="binding site" evidence="1">
    <location>
        <begin position="124"/>
        <end position="128"/>
    </location>
    <ligand>
        <name>UDP-N-acetyl-alpha-D-glucosamine</name>
        <dbReference type="ChEBI" id="CHEBI:57705"/>
    </ligand>
</feature>
<feature type="binding site" evidence="1">
    <location>
        <position position="309"/>
    </location>
    <ligand>
        <name>UDP-N-acetyl-alpha-D-glucosamine</name>
        <dbReference type="ChEBI" id="CHEBI:57705"/>
    </ligand>
</feature>
<feature type="binding site" evidence="1">
    <location>
        <position position="331"/>
    </location>
    <ligand>
        <name>UDP-N-acetyl-alpha-D-glucosamine</name>
        <dbReference type="ChEBI" id="CHEBI:57705"/>
    </ligand>
</feature>
<feature type="modified residue" description="2-(S-cysteinyl)pyruvic acid O-phosphothioketal" evidence="1">
    <location>
        <position position="119"/>
    </location>
</feature>